<evidence type="ECO:0000250" key="1">
    <source>
        <dbReference type="UniProtKB" id="P0A910"/>
    </source>
</evidence>
<evidence type="ECO:0000255" key="2">
    <source>
        <dbReference type="HAMAP-Rule" id="MF_00842"/>
    </source>
</evidence>
<evidence type="ECO:0000269" key="3">
    <source>
    </source>
</evidence>
<evidence type="ECO:0000269" key="4">
    <source>
    </source>
</evidence>
<evidence type="ECO:0000269" key="5">
    <source>
    </source>
</evidence>
<evidence type="ECO:0000305" key="6"/>
<evidence type="ECO:0000305" key="7">
    <source>
    </source>
</evidence>
<evidence type="ECO:0007744" key="8">
    <source>
        <dbReference type="PDB" id="3NB3"/>
    </source>
</evidence>
<protein>
    <recommendedName>
        <fullName evidence="2">Outer membrane protein A</fullName>
    </recommendedName>
    <alternativeName>
        <fullName evidence="2">Outer membrane porin A</fullName>
    </alternativeName>
</protein>
<organism>
    <name type="scientific">Shigella flexneri</name>
    <dbReference type="NCBI Taxonomy" id="623"/>
    <lineage>
        <taxon>Bacteria</taxon>
        <taxon>Pseudomonadati</taxon>
        <taxon>Pseudomonadota</taxon>
        <taxon>Gammaproteobacteria</taxon>
        <taxon>Enterobacterales</taxon>
        <taxon>Enterobacteriaceae</taxon>
        <taxon>Shigella</taxon>
    </lineage>
</organism>
<dbReference type="EMBL" id="AE005674">
    <property type="protein sequence ID" value="AAN42586.2"/>
    <property type="molecule type" value="Genomic_DNA"/>
</dbReference>
<dbReference type="RefSeq" id="NP_706879.2">
    <property type="nucleotide sequence ID" value="NC_004337.2"/>
</dbReference>
<dbReference type="RefSeq" id="WP_005047463.1">
    <property type="nucleotide sequence ID" value="NZ_WPGW01000054.1"/>
</dbReference>
<dbReference type="PDB" id="3NB3">
    <property type="method" value="EM"/>
    <property type="chains" value="A/B/C=1-346"/>
</dbReference>
<dbReference type="PDBsum" id="3NB3"/>
<dbReference type="SMR" id="A0A2S4N3N0"/>
<dbReference type="STRING" id="198214.SF0957"/>
<dbReference type="PaxDb" id="198214-SF0957"/>
<dbReference type="GeneID" id="1023906"/>
<dbReference type="KEGG" id="sfl:SF0957"/>
<dbReference type="PATRIC" id="fig|198214.7.peg.1115"/>
<dbReference type="HOGENOM" id="CLU_031536_0_0_6"/>
<dbReference type="PHI-base" id="PHI:9891"/>
<dbReference type="Proteomes" id="UP000001006">
    <property type="component" value="Chromosome"/>
</dbReference>
<dbReference type="GO" id="GO:0009279">
    <property type="term" value="C:cell outer membrane"/>
    <property type="evidence" value="ECO:0007669"/>
    <property type="project" value="UniProtKB-SubCell"/>
</dbReference>
<dbReference type="GO" id="GO:0046930">
    <property type="term" value="C:pore complex"/>
    <property type="evidence" value="ECO:0007669"/>
    <property type="project" value="UniProtKB-KW"/>
</dbReference>
<dbReference type="GO" id="GO:0015288">
    <property type="term" value="F:porin activity"/>
    <property type="evidence" value="ECO:0007669"/>
    <property type="project" value="UniProtKB-UniRule"/>
</dbReference>
<dbReference type="GO" id="GO:0034220">
    <property type="term" value="P:monoatomic ion transmembrane transport"/>
    <property type="evidence" value="ECO:0007669"/>
    <property type="project" value="UniProtKB-UniRule"/>
</dbReference>
<dbReference type="CDD" id="cd07185">
    <property type="entry name" value="OmpA_C-like"/>
    <property type="match status" value="1"/>
</dbReference>
<dbReference type="FunFam" id="2.40.160.20:FF:000003">
    <property type="entry name" value="Outer membrane protein A"/>
    <property type="match status" value="1"/>
</dbReference>
<dbReference type="FunFam" id="3.30.1330.60:FF:000004">
    <property type="entry name" value="Outer membrane protein A"/>
    <property type="match status" value="1"/>
</dbReference>
<dbReference type="Gene3D" id="2.40.160.20">
    <property type="match status" value="1"/>
</dbReference>
<dbReference type="Gene3D" id="3.30.1330.60">
    <property type="entry name" value="OmpA-like domain"/>
    <property type="match status" value="1"/>
</dbReference>
<dbReference type="HAMAP" id="MF_00842">
    <property type="entry name" value="OmpA"/>
    <property type="match status" value="1"/>
</dbReference>
<dbReference type="InterPro" id="IPR050330">
    <property type="entry name" value="Bact_OuterMem_StrucFunc"/>
</dbReference>
<dbReference type="InterPro" id="IPR011250">
    <property type="entry name" value="OMP/PagP_b-brl"/>
</dbReference>
<dbReference type="InterPro" id="IPR006664">
    <property type="entry name" value="OMP_bac"/>
</dbReference>
<dbReference type="InterPro" id="IPR002368">
    <property type="entry name" value="OmpA"/>
</dbReference>
<dbReference type="InterPro" id="IPR006665">
    <property type="entry name" value="OmpA-like"/>
</dbReference>
<dbReference type="InterPro" id="IPR006690">
    <property type="entry name" value="OMPA-like_CS"/>
</dbReference>
<dbReference type="InterPro" id="IPR036737">
    <property type="entry name" value="OmpA-like_sf"/>
</dbReference>
<dbReference type="InterPro" id="IPR000498">
    <property type="entry name" value="OmpA-like_TM_dom"/>
</dbReference>
<dbReference type="NCBIfam" id="NF008071">
    <property type="entry name" value="PRK10808.1"/>
    <property type="match status" value="1"/>
</dbReference>
<dbReference type="PANTHER" id="PTHR30329:SF21">
    <property type="entry name" value="LIPOPROTEIN YIAD-RELATED"/>
    <property type="match status" value="1"/>
</dbReference>
<dbReference type="PANTHER" id="PTHR30329">
    <property type="entry name" value="STATOR ELEMENT OF FLAGELLAR MOTOR COMPLEX"/>
    <property type="match status" value="1"/>
</dbReference>
<dbReference type="Pfam" id="PF00691">
    <property type="entry name" value="OmpA"/>
    <property type="match status" value="1"/>
</dbReference>
<dbReference type="Pfam" id="PF01389">
    <property type="entry name" value="OmpA_membrane"/>
    <property type="match status" value="1"/>
</dbReference>
<dbReference type="PRINTS" id="PR01021">
    <property type="entry name" value="OMPADOMAIN"/>
</dbReference>
<dbReference type="PRINTS" id="PR01022">
    <property type="entry name" value="OUTRMMBRANEA"/>
</dbReference>
<dbReference type="SUPFAM" id="SSF56925">
    <property type="entry name" value="OMPA-like"/>
    <property type="match status" value="1"/>
</dbReference>
<dbReference type="SUPFAM" id="SSF103088">
    <property type="entry name" value="OmpA-like"/>
    <property type="match status" value="1"/>
</dbReference>
<dbReference type="PROSITE" id="PS01068">
    <property type="entry name" value="OMPA_1"/>
    <property type="match status" value="1"/>
</dbReference>
<dbReference type="PROSITE" id="PS51123">
    <property type="entry name" value="OMPA_2"/>
    <property type="match status" value="1"/>
</dbReference>
<accession>A0A2S4N3N0</accession>
<accession>Q7UD17</accession>
<accession>Q83RX2</accession>
<feature type="signal peptide" evidence="2 3">
    <location>
        <begin position="1"/>
        <end position="21"/>
    </location>
</feature>
<feature type="chain" id="PRO_0000447414" description="Outer membrane protein A" evidence="2">
    <location>
        <begin position="22"/>
        <end position="348"/>
    </location>
</feature>
<feature type="transmembrane region" description="Beta stranded" evidence="2">
    <location>
        <begin position="27"/>
        <end position="37"/>
    </location>
</feature>
<feature type="transmembrane region" description="Beta stranded" evidence="2">
    <location>
        <begin position="55"/>
        <end position="66"/>
    </location>
</feature>
<feature type="transmembrane region" description="Beta stranded" evidence="2">
    <location>
        <begin position="70"/>
        <end position="78"/>
    </location>
</feature>
<feature type="transmembrane region" description="Beta stranded" evidence="2">
    <location>
        <begin position="96"/>
        <end position="107"/>
    </location>
</feature>
<feature type="transmembrane region" description="Beta stranded" evidence="1 2">
    <location>
        <begin position="112"/>
        <end position="120"/>
    </location>
</feature>
<feature type="transmembrane region" description="Beta stranded" evidence="2">
    <location>
        <begin position="146"/>
        <end position="155"/>
    </location>
</feature>
<feature type="transmembrane region" description="Beta stranded" evidence="2">
    <location>
        <begin position="160"/>
        <end position="167"/>
    </location>
</feature>
<feature type="transmembrane region" description="Beta stranded" evidence="2">
    <location>
        <begin position="186"/>
        <end position="194"/>
    </location>
</feature>
<feature type="repeat" description="1">
    <location>
        <begin position="205"/>
        <end position="206"/>
    </location>
</feature>
<feature type="repeat" description="2">
    <location>
        <begin position="207"/>
        <end position="208"/>
    </location>
</feature>
<feature type="repeat" description="3">
    <location>
        <begin position="209"/>
        <end position="210"/>
    </location>
</feature>
<feature type="domain" description="OmpA-like" evidence="2">
    <location>
        <begin position="212"/>
        <end position="340"/>
    </location>
</feature>
<feature type="region of interest" description="Hinge-like" evidence="6">
    <location>
        <begin position="201"/>
        <end position="210"/>
    </location>
</feature>
<feature type="region of interest" description="3 X 2 AA tandem repeats of A-P">
    <location>
        <begin position="205"/>
        <end position="210"/>
    </location>
</feature>
<feature type="site" description="Part of salt bridge gating mechanism" evidence="2">
    <location>
        <position position="73"/>
    </location>
</feature>
<feature type="site" description="Part of salt bridge gating mechanism" evidence="2">
    <location>
        <position position="163"/>
    </location>
</feature>
<feature type="disulfide bond" evidence="2">
    <location>
        <begin position="313"/>
        <end position="325"/>
    </location>
</feature>
<sequence length="348" mass="37283">MKKTAIAIAVALAGFATVAQAAPKDNTWYTGAKLGWSQYHDTGFIPNNGPTHENQLGAGAFGGYQVNPYVGFEMGYDWLGRMPYKGDNINGAYKAQGVQLTAKLGYPITDDLDIYTRLGGMVWRADTKANVPGGASFKDHDTGVSPVFAGGVEYAITPEIATRLEYQWTNNIGDANTIGTRPDNGLLSLGVSYRFGQGEAAPVVAPAPAPEVQTKHFTLKSDVLFNFNKATLKPEGQAALDQLYSQLSNLDPKDGSVVVLGYTDRIGSDAYNQGLSERRAQSVVDYLISKGIPADKISARGMGESNPVTGNTCDNVKQRAALIDCLAPDRRVEIEVKGIKDVVTQPQA</sequence>
<comment type="function">
    <text evidence="2">With TolR probably plays a role in maintaining the position of the peptidoglycan cell wall in the periplasm. Acts as a porin with low permeability that allows slow penetration of small solutes; an internal gate slows down solute passage.</text>
</comment>
<comment type="function">
    <text evidence="2">Required for conjugation with F-type plasmids; probably serves as the mating receptor on recipient cells.</text>
</comment>
<comment type="function">
    <text evidence="5">(Microbial infection) Serves as a secondary receptor during phage Sf6 infection; infection requires both lipopolysaccharide (LPS) and the OmpA beta-barrel.</text>
</comment>
<comment type="subunit">
    <text evidence="2">Monomer and homodimer.</text>
</comment>
<comment type="subunit">
    <text evidence="3 4">(Microbial infection) Upon infection with phage Sf6 associates with the mature bacteriophage capsid (PubMed:21071053, PubMed:22386055). Was originally suggested to be within the bacteriophage capsid (PubMed:21071053). This has been disproven (PubMed:22386055).</text>
</comment>
<comment type="subcellular location">
    <subcellularLocation>
        <location>Extracellular vesicle</location>
    </subcellularLocation>
    <text evidence="4">(Microbial infection) Upon infection with phage Sf6 is found in extracellular vesicles that associate with the tails of mature phage particles.</text>
</comment>
<comment type="subcellular location">
    <subcellularLocation>
        <location evidence="1 2">Cell outer membrane</location>
        <topology evidence="2 7">Multi-pass membrane protein</topology>
    </subcellularLocation>
</comment>
<comment type="domain">
    <text evidence="2">The extracellular loops are most variable in sequence, and in some bacteria confer sensitivity to phage and/or colicins.</text>
</comment>
<comment type="disruption phenotype">
    <text evidence="4 5">No effect on propagation of phage Sf6 (PubMed:22386055). Upon infection with phage Sf6, single deletion mutant has a wild-type level of small plaques but a better than wild-type survival level; double ompA-ompC deletions have about 10-fold fewer plaques and survive infection considerably better than wild-type, are infected more slowly and have fewer extracellular vesicles associated with mature bacteriophage (PubMed:24673644).</text>
</comment>
<comment type="similarity">
    <text evidence="2">Belongs to the outer membrane OOP (TC 1.B.6) superfamily. OmpA family.</text>
</comment>
<proteinExistence type="evidence at protein level"/>
<keyword id="KW-0002">3D-structure</keyword>
<keyword id="KW-0998">Cell outer membrane</keyword>
<keyword id="KW-0184">Conjugation</keyword>
<keyword id="KW-0903">Direct protein sequencing</keyword>
<keyword id="KW-1015">Disulfide bond</keyword>
<keyword id="KW-0945">Host-virus interaction</keyword>
<keyword id="KW-0406">Ion transport</keyword>
<keyword id="KW-0472">Membrane</keyword>
<keyword id="KW-0626">Porin</keyword>
<keyword id="KW-1185">Reference proteome</keyword>
<keyword id="KW-0677">Repeat</keyword>
<keyword id="KW-0732">Signal</keyword>
<keyword id="KW-0812">Transmembrane</keyword>
<keyword id="KW-1134">Transmembrane beta strand</keyword>
<keyword id="KW-0813">Transport</keyword>
<reference key="1">
    <citation type="journal article" date="2002" name="Nucleic Acids Res.">
        <title>Genome sequence of Shigella flexneri 2a: insights into pathogenicity through comparison with genomes of Escherichia coli K12 and O157.</title>
        <authorList>
            <person name="Jin Q."/>
            <person name="Yuan Z."/>
            <person name="Xu J."/>
            <person name="Wang Y."/>
            <person name="Shen Y."/>
            <person name="Lu W."/>
            <person name="Wang J."/>
            <person name="Liu H."/>
            <person name="Yang J."/>
            <person name="Yang F."/>
            <person name="Zhang X."/>
            <person name="Zhang J."/>
            <person name="Yang G."/>
            <person name="Wu H."/>
            <person name="Qu D."/>
            <person name="Dong J."/>
            <person name="Sun L."/>
            <person name="Xue Y."/>
            <person name="Zhao A."/>
            <person name="Gao Y."/>
            <person name="Zhu J."/>
            <person name="Kan B."/>
            <person name="Ding K."/>
            <person name="Chen S."/>
            <person name="Cheng H."/>
            <person name="Yao Z."/>
            <person name="He B."/>
            <person name="Chen R."/>
            <person name="Ma D."/>
            <person name="Qiang B."/>
            <person name="Wen Y."/>
            <person name="Hou Y."/>
            <person name="Yu J."/>
        </authorList>
    </citation>
    <scope>NUCLEOTIDE SEQUENCE [LARGE SCALE GENOMIC DNA]</scope>
    <source>
        <strain>301 / Serotype 2a</strain>
    </source>
</reference>
<reference key="2">
    <citation type="journal article" date="2012" name="Virology">
        <title>Structural evolution of the P22-like phages: comparison of Sf6 and P22 procapsid and virion architectures.</title>
        <authorList>
            <person name="Parent K.N."/>
            <person name="Gilcrease E.B."/>
            <person name="Casjens S.R."/>
            <person name="Baker T.S."/>
        </authorList>
    </citation>
    <scope>SUBUNIT (MICROBIAL INFECTION)</scope>
    <scope>SUBCELLULAR LOCATION (MICROBIAL INFECTION)</scope>
    <scope>DISRUPTION PHENOTYPE</scope>
    <source>
        <strain>PE577 / Serotype 2a</strain>
    </source>
</reference>
<reference key="3">
    <citation type="journal article" date="2014" name="Mol. Microbiol.">
        <title>OmpA and OmpC are critical host factors for bacteriophage Sf6 entry in Shigella.</title>
        <authorList>
            <person name="Parent K.N."/>
            <person name="Erb M.L."/>
            <person name="Cardone G."/>
            <person name="Nguyen K."/>
            <person name="Gilcrease E.B."/>
            <person name="Porcek N.B."/>
            <person name="Pogliano J."/>
            <person name="Baker T.S."/>
            <person name="Casjens S.R."/>
        </authorList>
    </citation>
    <scope>FUNCTION (MICROBIAL INFECTION)</scope>
    <scope>DISRUPTION PHENOTYPE</scope>
    <source>
        <strain>PE577 / Serotype 2a</strain>
    </source>
</reference>
<reference evidence="8" key="4">
    <citation type="journal article" date="2011" name="Virology">
        <title>The host outer membrane proteins OmpA and OmpC are associated with the Shigella phage Sf6 virion.</title>
        <authorList>
            <person name="Zhao H."/>
            <person name="Sequeira R.D."/>
            <person name="Galeva N.A."/>
            <person name="Tang L."/>
        </authorList>
    </citation>
    <scope>STRUCTURE BY ELECTRON MICROSCOPY (19.00 ANGSTROMS)</scope>
    <scope>PROTEIN SEQUENCE OF 22-26</scope>
    <scope>IDENTIFICATION BY MASS SPECTROMETRY</scope>
    <scope>SUBUNIT (MICROBIAL INFECTION)</scope>
    <source>
        <strain>M94</strain>
    </source>
</reference>
<name>OMPA_SHIFL</name>
<gene>
    <name evidence="2" type="primary">ompA</name>
    <name type="ordered locus">SF0957</name>
</gene>